<proteinExistence type="inferred from homology"/>
<dbReference type="EMBL" id="AAFI02000071">
    <property type="protein sequence ID" value="EAL65038.1"/>
    <property type="molecule type" value="Genomic_DNA"/>
</dbReference>
<dbReference type="RefSeq" id="XP_638396.1">
    <property type="nucleotide sequence ID" value="XM_633304.1"/>
</dbReference>
<dbReference type="SMR" id="Q54P62"/>
<dbReference type="FunCoup" id="Q54P62">
    <property type="interactions" value="109"/>
</dbReference>
<dbReference type="STRING" id="44689.Q54P62"/>
<dbReference type="PaxDb" id="44689-DDB0233113"/>
<dbReference type="EnsemblProtists" id="EAL65038">
    <property type="protein sequence ID" value="EAL65038"/>
    <property type="gene ID" value="DDB_G0284771"/>
</dbReference>
<dbReference type="GeneID" id="8624765"/>
<dbReference type="KEGG" id="ddi:DDB_G0284771"/>
<dbReference type="dictyBase" id="DDB_G0284771">
    <property type="gene designation" value="orcF"/>
</dbReference>
<dbReference type="VEuPathDB" id="AmoebaDB:DDB_G0284771"/>
<dbReference type="eggNOG" id="KOG4557">
    <property type="taxonomic scope" value="Eukaryota"/>
</dbReference>
<dbReference type="HOGENOM" id="CLU_583211_0_0_1"/>
<dbReference type="InParanoid" id="Q54P62"/>
<dbReference type="Reactome" id="R-DDI-68616">
    <property type="pathway name" value="Assembly of the ORC complex at the origin of replication"/>
</dbReference>
<dbReference type="Reactome" id="R-DDI-68689">
    <property type="pathway name" value="CDC6 association with the ORC:origin complex"/>
</dbReference>
<dbReference type="Reactome" id="R-DDI-68962">
    <property type="pathway name" value="Activation of the pre-replicative complex"/>
</dbReference>
<dbReference type="PRO" id="PR:Q54P62"/>
<dbReference type="Proteomes" id="UP000002195">
    <property type="component" value="Chromosome 4"/>
</dbReference>
<dbReference type="GO" id="GO:0005664">
    <property type="term" value="C:nuclear origin of replication recognition complex"/>
    <property type="evidence" value="ECO:0000318"/>
    <property type="project" value="GO_Central"/>
</dbReference>
<dbReference type="GO" id="GO:0003677">
    <property type="term" value="F:DNA binding"/>
    <property type="evidence" value="ECO:0007669"/>
    <property type="project" value="UniProtKB-KW"/>
</dbReference>
<dbReference type="GO" id="GO:0006270">
    <property type="term" value="P:DNA replication initiation"/>
    <property type="evidence" value="ECO:0000318"/>
    <property type="project" value="GO_Central"/>
</dbReference>
<dbReference type="Gene3D" id="1.10.472.10">
    <property type="entry name" value="Cyclin-like"/>
    <property type="match status" value="1"/>
</dbReference>
<dbReference type="InterPro" id="IPR036915">
    <property type="entry name" value="Cyclin-like_sf"/>
</dbReference>
<dbReference type="InterPro" id="IPR054113">
    <property type="entry name" value="ORC6_cyclin-like_2nd"/>
</dbReference>
<dbReference type="InterPro" id="IPR008721">
    <property type="entry name" value="ORC6_cyclin_first"/>
</dbReference>
<dbReference type="InterPro" id="IPR020529">
    <property type="entry name" value="ORC6_met/pln"/>
</dbReference>
<dbReference type="PANTHER" id="PTHR13394">
    <property type="entry name" value="ORIGIN RECOGNITION COMPLEX SUBUNIT 6"/>
    <property type="match status" value="1"/>
</dbReference>
<dbReference type="PANTHER" id="PTHR13394:SF0">
    <property type="entry name" value="ORIGIN RECOGNITION COMPLEX SUBUNIT 6"/>
    <property type="match status" value="1"/>
</dbReference>
<dbReference type="Pfam" id="PF05460">
    <property type="entry name" value="ORC6"/>
    <property type="match status" value="1"/>
</dbReference>
<dbReference type="Pfam" id="PF21913">
    <property type="entry name" value="ORC6_2nd"/>
    <property type="match status" value="1"/>
</dbReference>
<dbReference type="SUPFAM" id="SSF47954">
    <property type="entry name" value="Cyclin-like"/>
    <property type="match status" value="1"/>
</dbReference>
<evidence type="ECO:0000250" key="1"/>
<evidence type="ECO:0000256" key="2">
    <source>
        <dbReference type="SAM" id="MobiDB-lite"/>
    </source>
</evidence>
<evidence type="ECO:0000305" key="3"/>
<reference key="1">
    <citation type="journal article" date="2005" name="Nature">
        <title>The genome of the social amoeba Dictyostelium discoideum.</title>
        <authorList>
            <person name="Eichinger L."/>
            <person name="Pachebat J.A."/>
            <person name="Gloeckner G."/>
            <person name="Rajandream M.A."/>
            <person name="Sucgang R."/>
            <person name="Berriman M."/>
            <person name="Song J."/>
            <person name="Olsen R."/>
            <person name="Szafranski K."/>
            <person name="Xu Q."/>
            <person name="Tunggal B."/>
            <person name="Kummerfeld S."/>
            <person name="Madera M."/>
            <person name="Konfortov B.A."/>
            <person name="Rivero F."/>
            <person name="Bankier A.T."/>
            <person name="Lehmann R."/>
            <person name="Hamlin N."/>
            <person name="Davies R."/>
            <person name="Gaudet P."/>
            <person name="Fey P."/>
            <person name="Pilcher K."/>
            <person name="Chen G."/>
            <person name="Saunders D."/>
            <person name="Sodergren E.J."/>
            <person name="Davis P."/>
            <person name="Kerhornou A."/>
            <person name="Nie X."/>
            <person name="Hall N."/>
            <person name="Anjard C."/>
            <person name="Hemphill L."/>
            <person name="Bason N."/>
            <person name="Farbrother P."/>
            <person name="Desany B."/>
            <person name="Just E."/>
            <person name="Morio T."/>
            <person name="Rost R."/>
            <person name="Churcher C.M."/>
            <person name="Cooper J."/>
            <person name="Haydock S."/>
            <person name="van Driessche N."/>
            <person name="Cronin A."/>
            <person name="Goodhead I."/>
            <person name="Muzny D.M."/>
            <person name="Mourier T."/>
            <person name="Pain A."/>
            <person name="Lu M."/>
            <person name="Harper D."/>
            <person name="Lindsay R."/>
            <person name="Hauser H."/>
            <person name="James K.D."/>
            <person name="Quiles M."/>
            <person name="Madan Babu M."/>
            <person name="Saito T."/>
            <person name="Buchrieser C."/>
            <person name="Wardroper A."/>
            <person name="Felder M."/>
            <person name="Thangavelu M."/>
            <person name="Johnson D."/>
            <person name="Knights A."/>
            <person name="Loulseged H."/>
            <person name="Mungall K.L."/>
            <person name="Oliver K."/>
            <person name="Price C."/>
            <person name="Quail M.A."/>
            <person name="Urushihara H."/>
            <person name="Hernandez J."/>
            <person name="Rabbinowitsch E."/>
            <person name="Steffen D."/>
            <person name="Sanders M."/>
            <person name="Ma J."/>
            <person name="Kohara Y."/>
            <person name="Sharp S."/>
            <person name="Simmonds M.N."/>
            <person name="Spiegler S."/>
            <person name="Tivey A."/>
            <person name="Sugano S."/>
            <person name="White B."/>
            <person name="Walker D."/>
            <person name="Woodward J.R."/>
            <person name="Winckler T."/>
            <person name="Tanaka Y."/>
            <person name="Shaulsky G."/>
            <person name="Schleicher M."/>
            <person name="Weinstock G.M."/>
            <person name="Rosenthal A."/>
            <person name="Cox E.C."/>
            <person name="Chisholm R.L."/>
            <person name="Gibbs R.A."/>
            <person name="Loomis W.F."/>
            <person name="Platzer M."/>
            <person name="Kay R.R."/>
            <person name="Williams J.G."/>
            <person name="Dear P.H."/>
            <person name="Noegel A.A."/>
            <person name="Barrell B.G."/>
            <person name="Kuspa A."/>
        </authorList>
    </citation>
    <scope>NUCLEOTIDE SEQUENCE [LARGE SCALE GENOMIC DNA]</scope>
    <source>
        <strain>AX4</strain>
    </source>
</reference>
<keyword id="KW-0235">DNA replication</keyword>
<keyword id="KW-0238">DNA-binding</keyword>
<keyword id="KW-0539">Nucleus</keyword>
<keyword id="KW-1185">Reference proteome</keyword>
<organism>
    <name type="scientific">Dictyostelium discoideum</name>
    <name type="common">Social amoeba</name>
    <dbReference type="NCBI Taxonomy" id="44689"/>
    <lineage>
        <taxon>Eukaryota</taxon>
        <taxon>Amoebozoa</taxon>
        <taxon>Evosea</taxon>
        <taxon>Eumycetozoa</taxon>
        <taxon>Dictyostelia</taxon>
        <taxon>Dictyosteliales</taxon>
        <taxon>Dictyosteliaceae</taxon>
        <taxon>Dictyostelium</taxon>
    </lineage>
</organism>
<accession>Q54P62</accession>
<comment type="function">
    <text evidence="1">Component of the origin recognition complex (ORC) that binds origins of replication. DNA-binding is ATP-dependent, however specific DNA sequences that define origins of replication have not been identified so far. ORC is required to assemble the pre-replication complex necessary to initiate DNA replication (By similarity).</text>
</comment>
<comment type="subunit">
    <text evidence="1">ORC is composed of six subunits.</text>
</comment>
<comment type="subcellular location">
    <subcellularLocation>
        <location evidence="1">Nucleus</location>
    </subcellularLocation>
</comment>
<comment type="similarity">
    <text evidence="3">Belongs to the ORC6 family.</text>
</comment>
<protein>
    <recommendedName>
        <fullName>Origin recognition complex subunit 6</fullName>
    </recommendedName>
    <alternativeName>
        <fullName>Origin replication complex subunit F</fullName>
    </alternativeName>
</protein>
<gene>
    <name type="primary">orcF</name>
    <name type="synonym">orc6</name>
    <name type="ORF">DDB_G0284771</name>
</gene>
<name>ORC6_DICDI</name>
<sequence>MDIEDVMNKLSLKNKKVLNRSSEYSRLIKVKRPMGLGPLEMCKPGACIFVACKELSIELNKSQLVRVLGTNDKLFEQSILALYTILGKKRPPYSIVEISNTFKLNSTICESSENLLKLYRTKILGGIEEVQSQFTNIDDGIFSAASVYIMTQQHSINIDHTLLLSLVDCSQETFQRAMNAITQCCYQGESIVKLKKTPPKNKQNTILRSPTSILISSSSTLNNTTTSTTTTAPKSPIPIPSLTPISQIKNLTTKPIVSPSSSPLLSSISPPKVLATPTLSSSSSSSSSSSSSLSPPLSSNPTTDLSSTNEPIVFNISSELLPIPPTTTFKNDGNENKNNTKNCNIEIIEEISNVDESPFNDNSVKKIEQSNPNISNKKRSRDELEKESELGKSQPPQPQQQPQQQQQQQKEKSVKNKINEGDLTLEQERLLIKKKKEQQFNDWKNSDFAKSKPTPVNATKQLTLDSFFK</sequence>
<feature type="chain" id="PRO_0000328604" description="Origin recognition complex subunit 6">
    <location>
        <begin position="1"/>
        <end position="469"/>
    </location>
</feature>
<feature type="region of interest" description="Disordered" evidence="2">
    <location>
        <begin position="218"/>
        <end position="241"/>
    </location>
</feature>
<feature type="region of interest" description="Disordered" evidence="2">
    <location>
        <begin position="275"/>
        <end position="309"/>
    </location>
</feature>
<feature type="region of interest" description="Disordered" evidence="2">
    <location>
        <begin position="356"/>
        <end position="423"/>
    </location>
</feature>
<feature type="region of interest" description="Disordered" evidence="2">
    <location>
        <begin position="436"/>
        <end position="469"/>
    </location>
</feature>
<feature type="compositionally biased region" description="Low complexity" evidence="2">
    <location>
        <begin position="218"/>
        <end position="234"/>
    </location>
</feature>
<feature type="compositionally biased region" description="Low complexity" evidence="2">
    <location>
        <begin position="275"/>
        <end position="308"/>
    </location>
</feature>
<feature type="compositionally biased region" description="Basic and acidic residues" evidence="2">
    <location>
        <begin position="380"/>
        <end position="390"/>
    </location>
</feature>
<feature type="compositionally biased region" description="Basic and acidic residues" evidence="2">
    <location>
        <begin position="409"/>
        <end position="423"/>
    </location>
</feature>
<feature type="compositionally biased region" description="Polar residues" evidence="2">
    <location>
        <begin position="454"/>
        <end position="469"/>
    </location>
</feature>